<keyword id="KW-0004">4Fe-4S</keyword>
<keyword id="KW-0067">ATP-binding</keyword>
<keyword id="KW-0963">Cytoplasm</keyword>
<keyword id="KW-0408">Iron</keyword>
<keyword id="KW-0411">Iron-sulfur</keyword>
<keyword id="KW-0460">Magnesium</keyword>
<keyword id="KW-0479">Metal-binding</keyword>
<keyword id="KW-0547">Nucleotide-binding</keyword>
<keyword id="KW-1185">Reference proteome</keyword>
<keyword id="KW-0694">RNA-binding</keyword>
<keyword id="KW-0808">Transferase</keyword>
<keyword id="KW-0819">tRNA processing</keyword>
<keyword id="KW-0820">tRNA-binding</keyword>
<reference key="1">
    <citation type="journal article" date="2009" name="J. Bacteriol.">
        <title>Complete genome sequence and comparative genome analysis of enteropathogenic Escherichia coli O127:H6 strain E2348/69.</title>
        <authorList>
            <person name="Iguchi A."/>
            <person name="Thomson N.R."/>
            <person name="Ogura Y."/>
            <person name="Saunders D."/>
            <person name="Ooka T."/>
            <person name="Henderson I.R."/>
            <person name="Harris D."/>
            <person name="Asadulghani M."/>
            <person name="Kurokawa K."/>
            <person name="Dean P."/>
            <person name="Kenny B."/>
            <person name="Quail M.A."/>
            <person name="Thurston S."/>
            <person name="Dougan G."/>
            <person name="Hayashi T."/>
            <person name="Parkhill J."/>
            <person name="Frankel G."/>
        </authorList>
    </citation>
    <scope>NUCLEOTIDE SEQUENCE [LARGE SCALE GENOMIC DNA]</scope>
    <source>
        <strain>E2348/69 / EPEC</strain>
    </source>
</reference>
<comment type="function">
    <text evidence="1">Catalyzes the ATP-dependent 2-thiolation of cytidine in position 32 of tRNA, to form 2-thiocytidine (s(2)C32). The sulfur atoms are provided by the cysteine/cysteine desulfurase (IscS) system.</text>
</comment>
<comment type="catalytic activity">
    <reaction evidence="1">
        <text>cytidine(32) in tRNA + S-sulfanyl-L-cysteinyl-[cysteine desulfurase] + AH2 + ATP = 2-thiocytidine(32) in tRNA + L-cysteinyl-[cysteine desulfurase] + A + AMP + diphosphate + H(+)</text>
        <dbReference type="Rhea" id="RHEA:57048"/>
        <dbReference type="Rhea" id="RHEA-COMP:10288"/>
        <dbReference type="Rhea" id="RHEA-COMP:12157"/>
        <dbReference type="Rhea" id="RHEA-COMP:12158"/>
        <dbReference type="Rhea" id="RHEA-COMP:14821"/>
        <dbReference type="ChEBI" id="CHEBI:13193"/>
        <dbReference type="ChEBI" id="CHEBI:15378"/>
        <dbReference type="ChEBI" id="CHEBI:17499"/>
        <dbReference type="ChEBI" id="CHEBI:29950"/>
        <dbReference type="ChEBI" id="CHEBI:30616"/>
        <dbReference type="ChEBI" id="CHEBI:33019"/>
        <dbReference type="ChEBI" id="CHEBI:61963"/>
        <dbReference type="ChEBI" id="CHEBI:82748"/>
        <dbReference type="ChEBI" id="CHEBI:141453"/>
        <dbReference type="ChEBI" id="CHEBI:456215"/>
    </reaction>
    <physiologicalReaction direction="left-to-right" evidence="1">
        <dbReference type="Rhea" id="RHEA:57049"/>
    </physiologicalReaction>
</comment>
<comment type="cofactor">
    <cofactor evidence="1">
        <name>Mg(2+)</name>
        <dbReference type="ChEBI" id="CHEBI:18420"/>
    </cofactor>
</comment>
<comment type="cofactor">
    <cofactor evidence="1">
        <name>[4Fe-4S] cluster</name>
        <dbReference type="ChEBI" id="CHEBI:49883"/>
    </cofactor>
    <text evidence="1">Binds 1 [4Fe-4S] cluster per subunit. The cluster is chelated by three Cys residues, the fourth Fe has a free coordination site that may bind a sulfur atom transferred from the persulfide of IscS.</text>
</comment>
<comment type="pathway">
    <text evidence="1">tRNA modification.</text>
</comment>
<comment type="subunit">
    <text evidence="1">Homodimer.</text>
</comment>
<comment type="subcellular location">
    <subcellularLocation>
        <location evidence="1">Cytoplasm</location>
    </subcellularLocation>
</comment>
<comment type="miscellaneous">
    <text evidence="1">The thiolation reaction likely consists of two steps: a first activation step by ATP to form an adenylated intermediate of the target base of tRNA, and a second nucleophilic substitution step of the sulfur (S) atom supplied by the hydrosulfide attached to the Fe-S cluster.</text>
</comment>
<comment type="similarity">
    <text evidence="1">Belongs to the TtcA family.</text>
</comment>
<sequence>MQENQQITKKEQYNLNKLQKRLRRNVGEAIADFNMIEEGDRIMVCLSGGKDSYTMLEILRNLQQSAPINFSLVAVNLDQKQPGFPEHVLPEYLEKLGVEYKIVEENTYGIVKEKIPEGKTTCSLCSRLRRGILYRTATELGATKIALGHHRDDILQTLFLNMFYGGKMKGMPPKLMSDDGKHIVIRPLAYCREKDIQRFADAKAFPIIPCNLCGSQTNLQRQVIADMLRDWDKRYPGRIETMFSAMQNVVPSHLCDTNLFDFKGITHGSEVVNGGDLAFDREEIPLQPAGWQPEEDENQLDELRLNVVEVK</sequence>
<accession>B7URE9</accession>
<evidence type="ECO:0000255" key="1">
    <source>
        <dbReference type="HAMAP-Rule" id="MF_01850"/>
    </source>
</evidence>
<proteinExistence type="inferred from homology"/>
<dbReference type="EC" id="2.8.1.-" evidence="1"/>
<dbReference type="EMBL" id="FM180568">
    <property type="protein sequence ID" value="CAS09084.1"/>
    <property type="molecule type" value="Genomic_DNA"/>
</dbReference>
<dbReference type="RefSeq" id="WP_001157409.1">
    <property type="nucleotide sequence ID" value="NC_011601.1"/>
</dbReference>
<dbReference type="SMR" id="B7URE9"/>
<dbReference type="KEGG" id="ecg:E2348C_1536"/>
<dbReference type="HOGENOM" id="CLU_026481_0_0_6"/>
<dbReference type="Proteomes" id="UP000008205">
    <property type="component" value="Chromosome"/>
</dbReference>
<dbReference type="GO" id="GO:0005737">
    <property type="term" value="C:cytoplasm"/>
    <property type="evidence" value="ECO:0007669"/>
    <property type="project" value="UniProtKB-SubCell"/>
</dbReference>
<dbReference type="GO" id="GO:0051539">
    <property type="term" value="F:4 iron, 4 sulfur cluster binding"/>
    <property type="evidence" value="ECO:0007669"/>
    <property type="project" value="UniProtKB-UniRule"/>
</dbReference>
<dbReference type="GO" id="GO:0005524">
    <property type="term" value="F:ATP binding"/>
    <property type="evidence" value="ECO:0007669"/>
    <property type="project" value="UniProtKB-UniRule"/>
</dbReference>
<dbReference type="GO" id="GO:0000287">
    <property type="term" value="F:magnesium ion binding"/>
    <property type="evidence" value="ECO:0007669"/>
    <property type="project" value="UniProtKB-UniRule"/>
</dbReference>
<dbReference type="GO" id="GO:0016783">
    <property type="term" value="F:sulfurtransferase activity"/>
    <property type="evidence" value="ECO:0007669"/>
    <property type="project" value="UniProtKB-UniRule"/>
</dbReference>
<dbReference type="GO" id="GO:0000049">
    <property type="term" value="F:tRNA binding"/>
    <property type="evidence" value="ECO:0007669"/>
    <property type="project" value="UniProtKB-KW"/>
</dbReference>
<dbReference type="GO" id="GO:0034227">
    <property type="term" value="P:tRNA thio-modification"/>
    <property type="evidence" value="ECO:0007669"/>
    <property type="project" value="UniProtKB-UniRule"/>
</dbReference>
<dbReference type="CDD" id="cd24138">
    <property type="entry name" value="TtcA-like"/>
    <property type="match status" value="1"/>
</dbReference>
<dbReference type="FunFam" id="3.40.50.620:FF:000046">
    <property type="entry name" value="tRNA-cytidine(32) 2-sulfurtransferase"/>
    <property type="match status" value="1"/>
</dbReference>
<dbReference type="Gene3D" id="3.40.50.620">
    <property type="entry name" value="HUPs"/>
    <property type="match status" value="1"/>
</dbReference>
<dbReference type="HAMAP" id="MF_01850">
    <property type="entry name" value="TtcA"/>
    <property type="match status" value="1"/>
</dbReference>
<dbReference type="InterPro" id="IPR014729">
    <property type="entry name" value="Rossmann-like_a/b/a_fold"/>
</dbReference>
<dbReference type="InterPro" id="IPR011063">
    <property type="entry name" value="TilS/TtcA_N"/>
</dbReference>
<dbReference type="InterPro" id="IPR012089">
    <property type="entry name" value="tRNA_Cyd_32_2_STrfase"/>
</dbReference>
<dbReference type="InterPro" id="IPR035107">
    <property type="entry name" value="tRNA_thiolation_TtcA_Ctu1"/>
</dbReference>
<dbReference type="NCBIfam" id="NF007972">
    <property type="entry name" value="PRK10696.1"/>
    <property type="match status" value="1"/>
</dbReference>
<dbReference type="PANTHER" id="PTHR43686:SF1">
    <property type="entry name" value="AMINOTRAN_5 DOMAIN-CONTAINING PROTEIN"/>
    <property type="match status" value="1"/>
</dbReference>
<dbReference type="PANTHER" id="PTHR43686">
    <property type="entry name" value="SULFURTRANSFERASE-RELATED"/>
    <property type="match status" value="1"/>
</dbReference>
<dbReference type="Pfam" id="PF01171">
    <property type="entry name" value="ATP_bind_3"/>
    <property type="match status" value="1"/>
</dbReference>
<dbReference type="PIRSF" id="PIRSF004976">
    <property type="entry name" value="ATPase_YdaO"/>
    <property type="match status" value="1"/>
</dbReference>
<dbReference type="SUPFAM" id="SSF52402">
    <property type="entry name" value="Adenine nucleotide alpha hydrolases-like"/>
    <property type="match status" value="1"/>
</dbReference>
<protein>
    <recommendedName>
        <fullName evidence="1">tRNA-cytidine(32) 2-sulfurtransferase</fullName>
        <ecNumber evidence="1">2.8.1.-</ecNumber>
    </recommendedName>
    <alternativeName>
        <fullName evidence="1">Two-thiocytidine biosynthesis protein A</fullName>
    </alternativeName>
    <alternativeName>
        <fullName evidence="1">tRNA 2-thiocytidine biosynthesis protein TtcA</fullName>
    </alternativeName>
</protein>
<feature type="chain" id="PRO_1000188633" description="tRNA-cytidine(32) 2-sulfurtransferase">
    <location>
        <begin position="1"/>
        <end position="311"/>
    </location>
</feature>
<feature type="short sequence motif" description="PP-loop motif" evidence="1">
    <location>
        <begin position="47"/>
        <end position="52"/>
    </location>
</feature>
<feature type="binding site" evidence="1">
    <location>
        <position position="122"/>
    </location>
    <ligand>
        <name>[4Fe-4S] cluster</name>
        <dbReference type="ChEBI" id="CHEBI:49883"/>
    </ligand>
</feature>
<feature type="binding site" evidence="1">
    <location>
        <position position="125"/>
    </location>
    <ligand>
        <name>[4Fe-4S] cluster</name>
        <dbReference type="ChEBI" id="CHEBI:49883"/>
    </ligand>
</feature>
<feature type="binding site" evidence="1">
    <location>
        <position position="213"/>
    </location>
    <ligand>
        <name>[4Fe-4S] cluster</name>
        <dbReference type="ChEBI" id="CHEBI:49883"/>
    </ligand>
</feature>
<organism>
    <name type="scientific">Escherichia coli O127:H6 (strain E2348/69 / EPEC)</name>
    <dbReference type="NCBI Taxonomy" id="574521"/>
    <lineage>
        <taxon>Bacteria</taxon>
        <taxon>Pseudomonadati</taxon>
        <taxon>Pseudomonadota</taxon>
        <taxon>Gammaproteobacteria</taxon>
        <taxon>Enterobacterales</taxon>
        <taxon>Enterobacteriaceae</taxon>
        <taxon>Escherichia</taxon>
    </lineage>
</organism>
<gene>
    <name evidence="1" type="primary">ttcA</name>
    <name type="ordered locus">E2348C_1536</name>
</gene>
<name>TTCA_ECO27</name>